<evidence type="ECO:0000250" key="1"/>
<evidence type="ECO:0000305" key="2"/>
<name>IHFA_BRUSU</name>
<sequence>MGGKTVTRADLAEAVYRKVGLSRTESAALVEMILDEVCDAIVNGETVKLSSFATFQVRDKNERIGRNPKTGEEVPILPRRVMTFKASNVLKQRILQEHQKRQGKTSK</sequence>
<accession>P64391</accession>
<accession>G0K8S6</accession>
<accession>Q8YGI0</accession>
<feature type="chain" id="PRO_0000105002" description="Integration host factor subunit alpha">
    <location>
        <begin position="1"/>
        <end position="107"/>
    </location>
</feature>
<dbReference type="EMBL" id="AE014291">
    <property type="protein sequence ID" value="AAN29707.1"/>
    <property type="molecule type" value="Genomic_DNA"/>
</dbReference>
<dbReference type="EMBL" id="CP002997">
    <property type="protein sequence ID" value="AEM18124.1"/>
    <property type="molecule type" value="Genomic_DNA"/>
</dbReference>
<dbReference type="RefSeq" id="WP_002963914.1">
    <property type="nucleotide sequence ID" value="NZ_KN046804.1"/>
</dbReference>
<dbReference type="SMR" id="P64391"/>
<dbReference type="KEGG" id="bms:BR0778"/>
<dbReference type="KEGG" id="bsi:BS1330_I0774"/>
<dbReference type="PATRIC" id="fig|204722.21.peg.2655"/>
<dbReference type="HOGENOM" id="CLU_105066_1_1_5"/>
<dbReference type="PhylomeDB" id="P64391"/>
<dbReference type="Proteomes" id="UP000007104">
    <property type="component" value="Chromosome I"/>
</dbReference>
<dbReference type="GO" id="GO:0005829">
    <property type="term" value="C:cytosol"/>
    <property type="evidence" value="ECO:0007669"/>
    <property type="project" value="TreeGrafter"/>
</dbReference>
<dbReference type="GO" id="GO:0003677">
    <property type="term" value="F:DNA binding"/>
    <property type="evidence" value="ECO:0007669"/>
    <property type="project" value="UniProtKB-UniRule"/>
</dbReference>
<dbReference type="GO" id="GO:0030527">
    <property type="term" value="F:structural constituent of chromatin"/>
    <property type="evidence" value="ECO:0007669"/>
    <property type="project" value="InterPro"/>
</dbReference>
<dbReference type="GO" id="GO:0006310">
    <property type="term" value="P:DNA recombination"/>
    <property type="evidence" value="ECO:0007669"/>
    <property type="project" value="UniProtKB-UniRule"/>
</dbReference>
<dbReference type="GO" id="GO:0009893">
    <property type="term" value="P:positive regulation of metabolic process"/>
    <property type="evidence" value="ECO:0007669"/>
    <property type="project" value="UniProtKB-ARBA"/>
</dbReference>
<dbReference type="GO" id="GO:0006355">
    <property type="term" value="P:regulation of DNA-templated transcription"/>
    <property type="evidence" value="ECO:0007669"/>
    <property type="project" value="UniProtKB-UniRule"/>
</dbReference>
<dbReference type="GO" id="GO:0006417">
    <property type="term" value="P:regulation of translation"/>
    <property type="evidence" value="ECO:0007669"/>
    <property type="project" value="UniProtKB-UniRule"/>
</dbReference>
<dbReference type="CDD" id="cd13835">
    <property type="entry name" value="IHF_A"/>
    <property type="match status" value="1"/>
</dbReference>
<dbReference type="Gene3D" id="4.10.520.10">
    <property type="entry name" value="IHF-like DNA-binding proteins"/>
    <property type="match status" value="1"/>
</dbReference>
<dbReference type="HAMAP" id="MF_00380">
    <property type="entry name" value="IHF_alpha"/>
    <property type="match status" value="1"/>
</dbReference>
<dbReference type="InterPro" id="IPR000119">
    <property type="entry name" value="Hist_DNA-bd"/>
</dbReference>
<dbReference type="InterPro" id="IPR020816">
    <property type="entry name" value="Histone-like_DNA-bd_CS"/>
</dbReference>
<dbReference type="InterPro" id="IPR010992">
    <property type="entry name" value="IHF-like_DNA-bd_dom_sf"/>
</dbReference>
<dbReference type="InterPro" id="IPR005684">
    <property type="entry name" value="IHF_alpha"/>
</dbReference>
<dbReference type="NCBIfam" id="TIGR00987">
    <property type="entry name" value="himA"/>
    <property type="match status" value="1"/>
</dbReference>
<dbReference type="NCBIfam" id="NF001401">
    <property type="entry name" value="PRK00285.1"/>
    <property type="match status" value="1"/>
</dbReference>
<dbReference type="PANTHER" id="PTHR33175">
    <property type="entry name" value="DNA-BINDING PROTEIN HU"/>
    <property type="match status" value="1"/>
</dbReference>
<dbReference type="PANTHER" id="PTHR33175:SF2">
    <property type="entry name" value="INTEGRATION HOST FACTOR SUBUNIT ALPHA"/>
    <property type="match status" value="1"/>
</dbReference>
<dbReference type="Pfam" id="PF00216">
    <property type="entry name" value="Bac_DNA_binding"/>
    <property type="match status" value="1"/>
</dbReference>
<dbReference type="PRINTS" id="PR01727">
    <property type="entry name" value="DNABINDINGHU"/>
</dbReference>
<dbReference type="SMART" id="SM00411">
    <property type="entry name" value="BHL"/>
    <property type="match status" value="1"/>
</dbReference>
<dbReference type="SUPFAM" id="SSF47729">
    <property type="entry name" value="IHF-like DNA-binding proteins"/>
    <property type="match status" value="1"/>
</dbReference>
<dbReference type="PROSITE" id="PS00045">
    <property type="entry name" value="HISTONE_LIKE"/>
    <property type="match status" value="1"/>
</dbReference>
<comment type="function">
    <text evidence="1">This protein is one of the two subunits of integration host factor, a specific DNA-binding protein that functions in genetic recombination as well as in transcriptional and translational control.</text>
</comment>
<comment type="subunit">
    <text evidence="1">Heterodimer of an alpha and a beta chain.</text>
</comment>
<comment type="similarity">
    <text evidence="2">Belongs to the bacterial histone-like protein family.</text>
</comment>
<proteinExistence type="inferred from homology"/>
<organism>
    <name type="scientific">Brucella suis biovar 1 (strain 1330)</name>
    <dbReference type="NCBI Taxonomy" id="204722"/>
    <lineage>
        <taxon>Bacteria</taxon>
        <taxon>Pseudomonadati</taxon>
        <taxon>Pseudomonadota</taxon>
        <taxon>Alphaproteobacteria</taxon>
        <taxon>Hyphomicrobiales</taxon>
        <taxon>Brucellaceae</taxon>
        <taxon>Brucella/Ochrobactrum group</taxon>
        <taxon>Brucella</taxon>
    </lineage>
</organism>
<keyword id="KW-0233">DNA recombination</keyword>
<keyword id="KW-0238">DNA-binding</keyword>
<keyword id="KW-0804">Transcription</keyword>
<keyword id="KW-0805">Transcription regulation</keyword>
<keyword id="KW-0810">Translation regulation</keyword>
<gene>
    <name type="primary">ihfA</name>
    <name type="synonym">himA</name>
    <name type="ordered locus">BR0778</name>
    <name type="ordered locus">BS1330_I0774</name>
</gene>
<reference key="1">
    <citation type="journal article" date="2002" name="Proc. Natl. Acad. Sci. U.S.A.">
        <title>The Brucella suis genome reveals fundamental similarities between animal and plant pathogens and symbionts.</title>
        <authorList>
            <person name="Paulsen I.T."/>
            <person name="Seshadri R."/>
            <person name="Nelson K.E."/>
            <person name="Eisen J.A."/>
            <person name="Heidelberg J.F."/>
            <person name="Read T.D."/>
            <person name="Dodson R.J."/>
            <person name="Umayam L.A."/>
            <person name="Brinkac L.M."/>
            <person name="Beanan M.J."/>
            <person name="Daugherty S.C."/>
            <person name="DeBoy R.T."/>
            <person name="Durkin A.S."/>
            <person name="Kolonay J.F."/>
            <person name="Madupu R."/>
            <person name="Nelson W.C."/>
            <person name="Ayodeji B."/>
            <person name="Kraul M."/>
            <person name="Shetty J."/>
            <person name="Malek J.A."/>
            <person name="Van Aken S.E."/>
            <person name="Riedmuller S."/>
            <person name="Tettelin H."/>
            <person name="Gill S.R."/>
            <person name="White O."/>
            <person name="Salzberg S.L."/>
            <person name="Hoover D.L."/>
            <person name="Lindler L.E."/>
            <person name="Halling S.M."/>
            <person name="Boyle S.M."/>
            <person name="Fraser C.M."/>
        </authorList>
    </citation>
    <scope>NUCLEOTIDE SEQUENCE [LARGE SCALE GENOMIC DNA]</scope>
    <source>
        <strain>1330</strain>
    </source>
</reference>
<reference key="2">
    <citation type="journal article" date="2011" name="J. Bacteriol.">
        <title>Revised genome sequence of Brucella suis 1330.</title>
        <authorList>
            <person name="Tae H."/>
            <person name="Shallom S."/>
            <person name="Settlage R."/>
            <person name="Preston D."/>
            <person name="Adams L.G."/>
            <person name="Garner H.R."/>
        </authorList>
    </citation>
    <scope>NUCLEOTIDE SEQUENCE [LARGE SCALE GENOMIC DNA]</scope>
    <source>
        <strain>1330</strain>
    </source>
</reference>
<protein>
    <recommendedName>
        <fullName>Integration host factor subunit alpha</fullName>
        <shortName>IHF-alpha</shortName>
    </recommendedName>
</protein>